<organism>
    <name type="scientific">Homo sapiens</name>
    <name type="common">Human</name>
    <dbReference type="NCBI Taxonomy" id="9606"/>
    <lineage>
        <taxon>Eukaryota</taxon>
        <taxon>Metazoa</taxon>
        <taxon>Chordata</taxon>
        <taxon>Craniata</taxon>
        <taxon>Vertebrata</taxon>
        <taxon>Euteleostomi</taxon>
        <taxon>Mammalia</taxon>
        <taxon>Eutheria</taxon>
        <taxon>Euarchontoglires</taxon>
        <taxon>Primates</taxon>
        <taxon>Haplorrhini</taxon>
        <taxon>Catarrhini</taxon>
        <taxon>Hominidae</taxon>
        <taxon>Homo</taxon>
    </lineage>
</organism>
<feature type="signal peptide" evidence="7 12">
    <location>
        <begin position="1"/>
        <end position="23"/>
    </location>
</feature>
<feature type="chain" id="PRO_0000240860" description="Endoplasmic reticulum membrane protein complex subunit 7">
    <location>
        <begin position="24"/>
        <end position="242"/>
    </location>
</feature>
<feature type="topological domain" description="Lumenal" evidence="7">
    <location>
        <begin position="24"/>
        <end position="159"/>
    </location>
</feature>
<feature type="transmembrane region" description="Helical" evidence="1">
    <location>
        <begin position="160"/>
        <end position="180"/>
    </location>
</feature>
<feature type="topological domain" description="Cytoplasmic" evidence="7">
    <location>
        <begin position="181"/>
        <end position="242"/>
    </location>
</feature>
<feature type="region of interest" description="Disordered" evidence="2">
    <location>
        <begin position="217"/>
        <end position="242"/>
    </location>
</feature>
<feature type="compositionally biased region" description="Low complexity" evidence="2">
    <location>
        <begin position="219"/>
        <end position="235"/>
    </location>
</feature>
<feature type="strand" evidence="14">
    <location>
        <begin position="45"/>
        <end position="52"/>
    </location>
</feature>
<feature type="strand" evidence="14">
    <location>
        <begin position="54"/>
        <end position="56"/>
    </location>
</feature>
<feature type="helix" evidence="14">
    <location>
        <begin position="58"/>
        <end position="62"/>
    </location>
</feature>
<feature type="strand" evidence="14">
    <location>
        <begin position="66"/>
        <end position="73"/>
    </location>
</feature>
<feature type="strand" evidence="14">
    <location>
        <begin position="75"/>
        <end position="82"/>
    </location>
</feature>
<feature type="strand" evidence="14">
    <location>
        <begin position="84"/>
        <end position="89"/>
    </location>
</feature>
<feature type="strand" evidence="14">
    <location>
        <begin position="91"/>
        <end position="99"/>
    </location>
</feature>
<feature type="strand" evidence="14">
    <location>
        <begin position="101"/>
        <end position="103"/>
    </location>
</feature>
<feature type="strand" evidence="14">
    <location>
        <begin position="108"/>
        <end position="112"/>
    </location>
</feature>
<feature type="strand" evidence="14">
    <location>
        <begin position="114"/>
        <end position="116"/>
    </location>
</feature>
<feature type="strand" evidence="14">
    <location>
        <begin position="118"/>
        <end position="122"/>
    </location>
</feature>
<feature type="strand" evidence="13">
    <location>
        <begin position="125"/>
        <end position="127"/>
    </location>
</feature>
<feature type="strand" evidence="14">
    <location>
        <begin position="136"/>
        <end position="141"/>
    </location>
</feature>
<feature type="turn" evidence="14">
    <location>
        <begin position="157"/>
        <end position="159"/>
    </location>
</feature>
<feature type="helix" evidence="14">
    <location>
        <begin position="160"/>
        <end position="162"/>
    </location>
</feature>
<feature type="helix" evidence="14">
    <location>
        <begin position="166"/>
        <end position="177"/>
    </location>
</feature>
<feature type="turn" evidence="14">
    <location>
        <begin position="178"/>
        <end position="180"/>
    </location>
</feature>
<evidence type="ECO:0000255" key="1"/>
<evidence type="ECO:0000256" key="2">
    <source>
        <dbReference type="SAM" id="MobiDB-lite"/>
    </source>
</evidence>
<evidence type="ECO:0000269" key="3">
    <source>
    </source>
</evidence>
<evidence type="ECO:0000269" key="4">
    <source>
    </source>
</evidence>
<evidence type="ECO:0000269" key="5">
    <source>
    </source>
</evidence>
<evidence type="ECO:0000269" key="6">
    <source>
    </source>
</evidence>
<evidence type="ECO:0000269" key="7">
    <source>
    </source>
</evidence>
<evidence type="ECO:0000269" key="8">
    <source>
    </source>
</evidence>
<evidence type="ECO:0000305" key="9"/>
<evidence type="ECO:0007744" key="10">
    <source>
        <dbReference type="PDB" id="6WW7"/>
    </source>
</evidence>
<evidence type="ECO:0007744" key="11">
    <source>
        <dbReference type="PDB" id="6Z3W"/>
    </source>
</evidence>
<evidence type="ECO:0007744" key="12">
    <source>
    </source>
</evidence>
<evidence type="ECO:0007829" key="13">
    <source>
        <dbReference type="PDB" id="6WW7"/>
    </source>
</evidence>
<evidence type="ECO:0007829" key="14">
    <source>
        <dbReference type="PDB" id="8J0O"/>
    </source>
</evidence>
<sequence length="242" mass="26471">MAAALWGFFPVLLLLLLSGDVQSSEVPGAAAEGSGGSGVGIGDRFKIEGRAVVPGVKPQDWISAARVLVDGEEHVGFLKTDGSFVVHDIPSGSYVVEVVSPAYRFDPVRVDITSKGKMRARYVNYIKTSEVVRLPYPLQMKSSGPPSYFIKRESWGWTDFLMNPMVMMMVLPLLIFVLLPKVVNTSDPDMRREMEQSMNMLNSNHELPDVSEFMTRLFSSKSSGKSSSGSSKTGKSGAGKRR</sequence>
<protein>
    <recommendedName>
        <fullName>Endoplasmic reticulum membrane protein complex subunit 7</fullName>
    </recommendedName>
    <alternativeName>
        <fullName>ER membrane protein complex subunit 7</fullName>
    </alternativeName>
</protein>
<dbReference type="EMBL" id="AJ250344">
    <property type="protein sequence ID" value="CAB96539.1"/>
    <property type="molecule type" value="mRNA"/>
</dbReference>
<dbReference type="EMBL" id="AJ245874">
    <property type="protein sequence ID" value="CAC01611.1"/>
    <property type="molecule type" value="mRNA"/>
</dbReference>
<dbReference type="EMBL" id="AF242729">
    <property type="protein sequence ID" value="AAG44477.1"/>
    <property type="molecule type" value="mRNA"/>
</dbReference>
<dbReference type="EMBL" id="AY358445">
    <property type="protein sequence ID" value="AAQ88810.1"/>
    <property type="molecule type" value="mRNA"/>
</dbReference>
<dbReference type="EMBL" id="AK314883">
    <property type="protein sequence ID" value="BAG37397.1"/>
    <property type="molecule type" value="mRNA"/>
</dbReference>
<dbReference type="EMBL" id="BC012456">
    <property type="protein sequence ID" value="AAH12456.1"/>
    <property type="molecule type" value="mRNA"/>
</dbReference>
<dbReference type="EMBL" id="BC104934">
    <property type="protein sequence ID" value="AAI04935.1"/>
    <property type="molecule type" value="mRNA"/>
</dbReference>
<dbReference type="EMBL" id="BC104936">
    <property type="protein sequence ID" value="AAI04937.1"/>
    <property type="molecule type" value="mRNA"/>
</dbReference>
<dbReference type="CCDS" id="CCDS10032.1"/>
<dbReference type="RefSeq" id="NP_064539.1">
    <property type="nucleotide sequence ID" value="NM_020154.3"/>
</dbReference>
<dbReference type="PDB" id="1B0G">
    <property type="method" value="X-ray"/>
    <property type="resolution" value="2.50 A"/>
    <property type="chains" value="C/F=4-12"/>
</dbReference>
<dbReference type="PDB" id="1LP9">
    <property type="method" value="X-ray"/>
    <property type="resolution" value="2.00 A"/>
    <property type="chains" value="C/J=4-12"/>
</dbReference>
<dbReference type="PDB" id="2J8U">
    <property type="method" value="X-ray"/>
    <property type="resolution" value="2.88 A"/>
    <property type="chains" value="C/J=4-12"/>
</dbReference>
<dbReference type="PDB" id="2JCC">
    <property type="method" value="X-ray"/>
    <property type="resolution" value="2.50 A"/>
    <property type="chains" value="C/J=4-12"/>
</dbReference>
<dbReference type="PDB" id="2UWE">
    <property type="method" value="X-ray"/>
    <property type="resolution" value="2.40 A"/>
    <property type="chains" value="C/J=4-12"/>
</dbReference>
<dbReference type="PDB" id="6WW7">
    <property type="method" value="EM"/>
    <property type="resolution" value="3.40 A"/>
    <property type="chains" value="G=1-242"/>
</dbReference>
<dbReference type="PDB" id="6Z3W">
    <property type="method" value="EM"/>
    <property type="resolution" value="6.40 A"/>
    <property type="chains" value="G=1-242"/>
</dbReference>
<dbReference type="PDB" id="7ADO">
    <property type="method" value="EM"/>
    <property type="resolution" value="3.39 A"/>
    <property type="chains" value="G=1-242"/>
</dbReference>
<dbReference type="PDB" id="8EOI">
    <property type="method" value="EM"/>
    <property type="resolution" value="3.40 A"/>
    <property type="chains" value="G=43-158"/>
</dbReference>
<dbReference type="PDB" id="8J0N">
    <property type="method" value="EM"/>
    <property type="resolution" value="3.47 A"/>
    <property type="chains" value="G=1-242"/>
</dbReference>
<dbReference type="PDB" id="8J0O">
    <property type="method" value="EM"/>
    <property type="resolution" value="3.32 A"/>
    <property type="chains" value="G=1-242"/>
</dbReference>
<dbReference type="PDB" id="8S9S">
    <property type="method" value="EM"/>
    <property type="resolution" value="3.60 A"/>
    <property type="chains" value="7=1-242"/>
</dbReference>
<dbReference type="PDB" id="9C7V">
    <property type="method" value="EM"/>
    <property type="resolution" value="6.60 A"/>
    <property type="chains" value="7=1-242"/>
</dbReference>
<dbReference type="PDBsum" id="1B0G"/>
<dbReference type="PDBsum" id="1LP9"/>
<dbReference type="PDBsum" id="2J8U"/>
<dbReference type="PDBsum" id="2JCC"/>
<dbReference type="PDBsum" id="2UWE"/>
<dbReference type="PDBsum" id="6WW7"/>
<dbReference type="PDBsum" id="6Z3W"/>
<dbReference type="PDBsum" id="7ADO"/>
<dbReference type="PDBsum" id="8EOI"/>
<dbReference type="PDBsum" id="8J0N"/>
<dbReference type="PDBsum" id="8J0O"/>
<dbReference type="PDBsum" id="8S9S"/>
<dbReference type="PDBsum" id="9C7V"/>
<dbReference type="EMDB" id="EMD-11732"/>
<dbReference type="EMDB" id="EMD-21929"/>
<dbReference type="EMDB" id="EMD-28376"/>
<dbReference type="EMDB" id="EMD-35906"/>
<dbReference type="EMDB" id="EMD-35907"/>
<dbReference type="EMDB" id="EMD-40245"/>
<dbReference type="EMDB" id="EMD-40246"/>
<dbReference type="EMDB" id="EMD-45295"/>
<dbReference type="SMR" id="Q9NPA0"/>
<dbReference type="BioGRID" id="121211">
    <property type="interactions" value="211"/>
</dbReference>
<dbReference type="ComplexPortal" id="CPX-5848">
    <property type="entry name" value="Endoplasmic reticulum membrane complex, EMC8 variant"/>
</dbReference>
<dbReference type="ComplexPortal" id="CPX-5881">
    <property type="entry name" value="Endoplasmic reticulum membrane complex, EMC9 variant"/>
</dbReference>
<dbReference type="CORUM" id="Q9NPA0"/>
<dbReference type="FunCoup" id="Q9NPA0">
    <property type="interactions" value="2065"/>
</dbReference>
<dbReference type="IntAct" id="Q9NPA0">
    <property type="interactions" value="91"/>
</dbReference>
<dbReference type="MINT" id="Q9NPA0"/>
<dbReference type="STRING" id="9606.ENSP00000256545"/>
<dbReference type="TCDB" id="3.A.27.1.1">
    <property type="family name" value="the endoplasmic reticulum membrane protein insertion complex (emc) family"/>
</dbReference>
<dbReference type="GlyGen" id="Q9NPA0">
    <property type="glycosylation" value="3 sites, 1 N-linked glycan (1 site), 1 O-linked glycan (2 sites)"/>
</dbReference>
<dbReference type="iPTMnet" id="Q9NPA0"/>
<dbReference type="PhosphoSitePlus" id="Q9NPA0"/>
<dbReference type="BioMuta" id="EMC7"/>
<dbReference type="DMDM" id="74752878"/>
<dbReference type="jPOST" id="Q9NPA0"/>
<dbReference type="MassIVE" id="Q9NPA0"/>
<dbReference type="PaxDb" id="9606-ENSP00000256545"/>
<dbReference type="PeptideAtlas" id="Q9NPA0"/>
<dbReference type="ProteomicsDB" id="81944"/>
<dbReference type="Pumba" id="Q9NPA0"/>
<dbReference type="Antibodypedia" id="2446">
    <property type="antibodies" value="50 antibodies from 18 providers"/>
</dbReference>
<dbReference type="DNASU" id="56851"/>
<dbReference type="Ensembl" id="ENST00000256545.9">
    <property type="protein sequence ID" value="ENSP00000256545.4"/>
    <property type="gene ID" value="ENSG00000134153.10"/>
</dbReference>
<dbReference type="GeneID" id="56851"/>
<dbReference type="KEGG" id="hsa:56851"/>
<dbReference type="MANE-Select" id="ENST00000256545.9">
    <property type="protein sequence ID" value="ENSP00000256545.4"/>
    <property type="RefSeq nucleotide sequence ID" value="NM_020154.3"/>
    <property type="RefSeq protein sequence ID" value="NP_064539.1"/>
</dbReference>
<dbReference type="UCSC" id="uc001zhm.4">
    <property type="organism name" value="human"/>
</dbReference>
<dbReference type="AGR" id="HGNC:24301"/>
<dbReference type="CTD" id="56851"/>
<dbReference type="GeneCards" id="EMC7"/>
<dbReference type="HGNC" id="HGNC:24301">
    <property type="gene designation" value="EMC7"/>
</dbReference>
<dbReference type="HPA" id="ENSG00000134153">
    <property type="expression patterns" value="Low tissue specificity"/>
</dbReference>
<dbReference type="MIM" id="620631">
    <property type="type" value="gene"/>
</dbReference>
<dbReference type="neXtProt" id="NX_Q9NPA0"/>
<dbReference type="OpenTargets" id="ENSG00000134153"/>
<dbReference type="PharmGKB" id="PA134900493"/>
<dbReference type="VEuPathDB" id="HostDB:ENSG00000134153"/>
<dbReference type="eggNOG" id="KOG3306">
    <property type="taxonomic scope" value="Eukaryota"/>
</dbReference>
<dbReference type="GeneTree" id="ENSGT00390000017490"/>
<dbReference type="InParanoid" id="Q9NPA0"/>
<dbReference type="OMA" id="EMENMQM"/>
<dbReference type="OrthoDB" id="27095at2759"/>
<dbReference type="PAN-GO" id="Q9NPA0">
    <property type="GO annotations" value="1 GO annotation based on evolutionary models"/>
</dbReference>
<dbReference type="PhylomeDB" id="Q9NPA0"/>
<dbReference type="TreeFam" id="TF106158"/>
<dbReference type="PathwayCommons" id="Q9NPA0"/>
<dbReference type="SignaLink" id="Q9NPA0"/>
<dbReference type="BioGRID-ORCS" id="56851">
    <property type="hits" value="537 hits in 1165 CRISPR screens"/>
</dbReference>
<dbReference type="ChiTaRS" id="EMC7">
    <property type="organism name" value="human"/>
</dbReference>
<dbReference type="EvolutionaryTrace" id="Q9NPA0"/>
<dbReference type="GenomeRNAi" id="56851"/>
<dbReference type="Pharos" id="Q9NPA0">
    <property type="development level" value="Tdark"/>
</dbReference>
<dbReference type="PRO" id="PR:Q9NPA0"/>
<dbReference type="Proteomes" id="UP000005640">
    <property type="component" value="Chromosome 15"/>
</dbReference>
<dbReference type="RNAct" id="Q9NPA0">
    <property type="molecule type" value="protein"/>
</dbReference>
<dbReference type="Bgee" id="ENSG00000134153">
    <property type="expression patterns" value="Expressed in decidua and 207 other cell types or tissues"/>
</dbReference>
<dbReference type="ExpressionAtlas" id="Q9NPA0">
    <property type="expression patterns" value="baseline and differential"/>
</dbReference>
<dbReference type="GO" id="GO:0072546">
    <property type="term" value="C:EMC complex"/>
    <property type="evidence" value="ECO:0000314"/>
    <property type="project" value="UniProtKB"/>
</dbReference>
<dbReference type="GO" id="GO:0005789">
    <property type="term" value="C:endoplasmic reticulum membrane"/>
    <property type="evidence" value="ECO:0000314"/>
    <property type="project" value="UniProtKB"/>
</dbReference>
<dbReference type="GO" id="GO:0016020">
    <property type="term" value="C:membrane"/>
    <property type="evidence" value="ECO:0000314"/>
    <property type="project" value="UniProtKB"/>
</dbReference>
<dbReference type="GO" id="GO:0030246">
    <property type="term" value="F:carbohydrate binding"/>
    <property type="evidence" value="ECO:0007669"/>
    <property type="project" value="InterPro"/>
</dbReference>
<dbReference type="GO" id="GO:0045050">
    <property type="term" value="P:protein insertion into ER membrane by stop-transfer membrane-anchor sequence"/>
    <property type="evidence" value="ECO:0000314"/>
    <property type="project" value="ComplexPortal"/>
</dbReference>
<dbReference type="GO" id="GO:0071816">
    <property type="term" value="P:tail-anchored membrane protein insertion into ER membrane"/>
    <property type="evidence" value="ECO:0000314"/>
    <property type="project" value="UniProtKB"/>
</dbReference>
<dbReference type="InterPro" id="IPR013784">
    <property type="entry name" value="Carb-bd-like_fold"/>
</dbReference>
<dbReference type="InterPro" id="IPR039163">
    <property type="entry name" value="EMC7"/>
</dbReference>
<dbReference type="InterPro" id="IPR019008">
    <property type="entry name" value="EMC7_beta_sandwich"/>
</dbReference>
<dbReference type="PANTHER" id="PTHR13605">
    <property type="entry name" value="ER MEMBRANE PROTEIN COMPLEX SUBUNIT 7"/>
    <property type="match status" value="1"/>
</dbReference>
<dbReference type="PANTHER" id="PTHR13605:SF4">
    <property type="entry name" value="ER MEMBRANE PROTEIN COMPLEX SUBUNIT 7"/>
    <property type="match status" value="1"/>
</dbReference>
<dbReference type="Pfam" id="PF09430">
    <property type="entry name" value="EMC7_beta-sandw"/>
    <property type="match status" value="1"/>
</dbReference>
<dbReference type="SUPFAM" id="SSF49452">
    <property type="entry name" value="Starch-binding domain-like"/>
    <property type="match status" value="1"/>
</dbReference>
<proteinExistence type="evidence at protein level"/>
<accession>Q9NPA0</accession>
<accession>B2RC00</accession>
<accession>Q96ED5</accession>
<comment type="function">
    <text evidence="4 5 6 7 8 9">Part of the endoplasmic reticulum membrane protein complex (EMC) that enables the energy-independent insertion into endoplasmic reticulum membranes of newly synthesized membrane proteins (PubMed:29242231, PubMed:29809151, PubMed:30415835, PubMed:32439656, PubMed:32459176). Preferentially accommodates proteins with transmembrane domains that are weakly hydrophobic or contain destabilizing features such as charged and aromatic residues (PubMed:29242231, PubMed:29809151, PubMed:30415835). Involved in the cotranslational insertion of multi-pass membrane proteins in which stop-transfer membrane-anchor sequences become ER membrane spanning helices (PubMed:29809151, PubMed:30415835). It is also required for the post-translational insertion of tail-anchored/TA proteins in endoplasmic reticulum membranes (PubMed:29242231, PubMed:29809151). By mediating the proper cotranslational insertion of N-terminal transmembrane domains in an N-exo topology, with translocated N-terminus in the lumen of the ER, controls the topology of multi-pass membrane proteins like the G protein-coupled receptors (PubMed:30415835). By regulating the insertion of various proteins in membranes, it is indirectly involved in many cellular processes (Probable).</text>
</comment>
<comment type="subunit">
    <text evidence="3 4 7 8">Component of the ER membrane protein complex (EMC).</text>
</comment>
<comment type="interaction">
    <interactant intactId="EBI-6309137">
        <id>Q9NPA0</id>
    </interactant>
    <interactant intactId="EBI-3867333">
        <id>A8MQ03</id>
        <label>CYSRT1</label>
    </interactant>
    <organismsDiffer>false</organismsDiffer>
    <experiments>3</experiments>
</comment>
<comment type="interaction">
    <interactant intactId="EBI-6309137">
        <id>Q9NPA0</id>
    </interactant>
    <interactant intactId="EBI-11959885">
        <id>Q07627</id>
        <label>KRTAP1-1</label>
    </interactant>
    <organismsDiffer>false</organismsDiffer>
    <experiments>3</experiments>
</comment>
<comment type="interaction">
    <interactant intactId="EBI-6309137">
        <id>Q9NPA0</id>
    </interactant>
    <interactant intactId="EBI-11958178">
        <id>Q701N4</id>
        <label>KRTAP5-2</label>
    </interactant>
    <organismsDiffer>false</organismsDiffer>
    <experiments>3</experiments>
</comment>
<comment type="interaction">
    <interactant intactId="EBI-6309137">
        <id>Q9NPA0</id>
    </interactant>
    <interactant intactId="EBI-3958099">
        <id>P26371</id>
        <label>KRTAP5-9</label>
    </interactant>
    <organismsDiffer>false</organismsDiffer>
    <experiments>3</experiments>
</comment>
<comment type="interaction">
    <interactant intactId="EBI-6309137">
        <id>Q9NPA0</id>
    </interactant>
    <interactant intactId="EBI-16439278">
        <id>Q6FHY5</id>
        <label>MEOX2</label>
    </interactant>
    <organismsDiffer>false</organismsDiffer>
    <experiments>3</experiments>
</comment>
<comment type="interaction">
    <interactant intactId="EBI-6309137">
        <id>Q9NPA0</id>
    </interactant>
    <interactant intactId="EBI-22310682">
        <id>P0DPK4</id>
        <label>NOTCH2NLC</label>
    </interactant>
    <organismsDiffer>false</organismsDiffer>
    <experiments>3</experiments>
</comment>
<comment type="interaction">
    <interactant intactId="EBI-6309137">
        <id>Q9NPA0</id>
    </interactant>
    <interactant intactId="EBI-1054653">
        <id>P13667</id>
        <label>PDIA4</label>
    </interactant>
    <organismsDiffer>false</organismsDiffer>
    <experiments>2</experiments>
</comment>
<comment type="interaction">
    <interactant intactId="EBI-6309137">
        <id>Q9NPA0</id>
    </interactant>
    <interactant intactId="EBI-22114623">
        <id>Q5T9L3-1</id>
        <label>WLS</label>
    </interactant>
    <organismsDiffer>false</organismsDiffer>
    <experiments>3</experiments>
</comment>
<comment type="subcellular location">
    <subcellularLocation>
        <location evidence="3">Endoplasmic reticulum membrane</location>
        <topology evidence="7">Single-pass type I membrane protein</topology>
    </subcellularLocation>
</comment>
<comment type="similarity">
    <text evidence="9">Belongs to the EMC7 family.</text>
</comment>
<reference key="1">
    <citation type="journal article" date="2000" name="Biochem. Biophys. Res. Commun.">
        <title>Characterization of five novel human genes in the 11q13-q22 region.</title>
        <authorList>
            <person name="O'Brien K.P."/>
            <person name="Tapia-Paez I."/>
            <person name="Staahle-Baeckdahl M."/>
            <person name="Kedra D."/>
            <person name="Dumanski J.P."/>
        </authorList>
    </citation>
    <scope>NUCLEOTIDE SEQUENCE [MRNA]</scope>
</reference>
<reference key="2">
    <citation type="submission" date="1999-08" db="EMBL/GenBank/DDBJ databases">
        <title>Full-length of some new muscular transcript.</title>
        <authorList>
            <person name="Ievolella C."/>
            <person name="Lanfranchi G."/>
        </authorList>
    </citation>
    <scope>NUCLEOTIDE SEQUENCE [MRNA]</scope>
    <source>
        <tissue>Muscle</tissue>
    </source>
</reference>
<reference key="3">
    <citation type="submission" date="2000-03" db="EMBL/GenBank/DDBJ databases">
        <authorList>
            <person name="Xu X."/>
            <person name="Yang Y."/>
            <person name="Gao G."/>
            <person name="Xiao H."/>
            <person name="Chen Z."/>
            <person name="Han Z."/>
        </authorList>
    </citation>
    <scope>NUCLEOTIDE SEQUENCE [LARGE SCALE MRNA]</scope>
    <source>
        <tissue>Hypothalamus</tissue>
    </source>
</reference>
<reference key="4">
    <citation type="journal article" date="2003" name="Genome Res.">
        <title>The secreted protein discovery initiative (SPDI), a large-scale effort to identify novel human secreted and transmembrane proteins: a bioinformatics assessment.</title>
        <authorList>
            <person name="Clark H.F."/>
            <person name="Gurney A.L."/>
            <person name="Abaya E."/>
            <person name="Baker K."/>
            <person name="Baldwin D.T."/>
            <person name="Brush J."/>
            <person name="Chen J."/>
            <person name="Chow B."/>
            <person name="Chui C."/>
            <person name="Crowley C."/>
            <person name="Currell B."/>
            <person name="Deuel B."/>
            <person name="Dowd P."/>
            <person name="Eaton D."/>
            <person name="Foster J.S."/>
            <person name="Grimaldi C."/>
            <person name="Gu Q."/>
            <person name="Hass P.E."/>
            <person name="Heldens S."/>
            <person name="Huang A."/>
            <person name="Kim H.S."/>
            <person name="Klimowski L."/>
            <person name="Jin Y."/>
            <person name="Johnson S."/>
            <person name="Lee J."/>
            <person name="Lewis L."/>
            <person name="Liao D."/>
            <person name="Mark M.R."/>
            <person name="Robbie E."/>
            <person name="Sanchez C."/>
            <person name="Schoenfeld J."/>
            <person name="Seshagiri S."/>
            <person name="Simmons L."/>
            <person name="Singh J."/>
            <person name="Smith V."/>
            <person name="Stinson J."/>
            <person name="Vagts A."/>
            <person name="Vandlen R.L."/>
            <person name="Watanabe C."/>
            <person name="Wieand D."/>
            <person name="Woods K."/>
            <person name="Xie M.-H."/>
            <person name="Yansura D.G."/>
            <person name="Yi S."/>
            <person name="Yu G."/>
            <person name="Yuan J."/>
            <person name="Zhang M."/>
            <person name="Zhang Z."/>
            <person name="Goddard A.D."/>
            <person name="Wood W.I."/>
            <person name="Godowski P.J."/>
            <person name="Gray A.M."/>
        </authorList>
    </citation>
    <scope>NUCLEOTIDE SEQUENCE [LARGE SCALE MRNA]</scope>
</reference>
<reference key="5">
    <citation type="journal article" date="2004" name="Nat. Genet.">
        <title>Complete sequencing and characterization of 21,243 full-length human cDNAs.</title>
        <authorList>
            <person name="Ota T."/>
            <person name="Suzuki Y."/>
            <person name="Nishikawa T."/>
            <person name="Otsuki T."/>
            <person name="Sugiyama T."/>
            <person name="Irie R."/>
            <person name="Wakamatsu A."/>
            <person name="Hayashi K."/>
            <person name="Sato H."/>
            <person name="Nagai K."/>
            <person name="Kimura K."/>
            <person name="Makita H."/>
            <person name="Sekine M."/>
            <person name="Obayashi M."/>
            <person name="Nishi T."/>
            <person name="Shibahara T."/>
            <person name="Tanaka T."/>
            <person name="Ishii S."/>
            <person name="Yamamoto J."/>
            <person name="Saito K."/>
            <person name="Kawai Y."/>
            <person name="Isono Y."/>
            <person name="Nakamura Y."/>
            <person name="Nagahari K."/>
            <person name="Murakami K."/>
            <person name="Yasuda T."/>
            <person name="Iwayanagi T."/>
            <person name="Wagatsuma M."/>
            <person name="Shiratori A."/>
            <person name="Sudo H."/>
            <person name="Hosoiri T."/>
            <person name="Kaku Y."/>
            <person name="Kodaira H."/>
            <person name="Kondo H."/>
            <person name="Sugawara M."/>
            <person name="Takahashi M."/>
            <person name="Kanda K."/>
            <person name="Yokoi T."/>
            <person name="Furuya T."/>
            <person name="Kikkawa E."/>
            <person name="Omura Y."/>
            <person name="Abe K."/>
            <person name="Kamihara K."/>
            <person name="Katsuta N."/>
            <person name="Sato K."/>
            <person name="Tanikawa M."/>
            <person name="Yamazaki M."/>
            <person name="Ninomiya K."/>
            <person name="Ishibashi T."/>
            <person name="Yamashita H."/>
            <person name="Murakawa K."/>
            <person name="Fujimori K."/>
            <person name="Tanai H."/>
            <person name="Kimata M."/>
            <person name="Watanabe M."/>
            <person name="Hiraoka S."/>
            <person name="Chiba Y."/>
            <person name="Ishida S."/>
            <person name="Ono Y."/>
            <person name="Takiguchi S."/>
            <person name="Watanabe S."/>
            <person name="Yosida M."/>
            <person name="Hotuta T."/>
            <person name="Kusano J."/>
            <person name="Kanehori K."/>
            <person name="Takahashi-Fujii A."/>
            <person name="Hara H."/>
            <person name="Tanase T.-O."/>
            <person name="Nomura Y."/>
            <person name="Togiya S."/>
            <person name="Komai F."/>
            <person name="Hara R."/>
            <person name="Takeuchi K."/>
            <person name="Arita M."/>
            <person name="Imose N."/>
            <person name="Musashino K."/>
            <person name="Yuuki H."/>
            <person name="Oshima A."/>
            <person name="Sasaki N."/>
            <person name="Aotsuka S."/>
            <person name="Yoshikawa Y."/>
            <person name="Matsunawa H."/>
            <person name="Ichihara T."/>
            <person name="Shiohata N."/>
            <person name="Sano S."/>
            <person name="Moriya S."/>
            <person name="Momiyama H."/>
            <person name="Satoh N."/>
            <person name="Takami S."/>
            <person name="Terashima Y."/>
            <person name="Suzuki O."/>
            <person name="Nakagawa S."/>
            <person name="Senoh A."/>
            <person name="Mizoguchi H."/>
            <person name="Goto Y."/>
            <person name="Shimizu F."/>
            <person name="Wakebe H."/>
            <person name="Hishigaki H."/>
            <person name="Watanabe T."/>
            <person name="Sugiyama A."/>
            <person name="Takemoto M."/>
            <person name="Kawakami B."/>
            <person name="Yamazaki M."/>
            <person name="Watanabe K."/>
            <person name="Kumagai A."/>
            <person name="Itakura S."/>
            <person name="Fukuzumi Y."/>
            <person name="Fujimori Y."/>
            <person name="Komiyama M."/>
            <person name="Tashiro H."/>
            <person name="Tanigami A."/>
            <person name="Fujiwara T."/>
            <person name="Ono T."/>
            <person name="Yamada K."/>
            <person name="Fujii Y."/>
            <person name="Ozaki K."/>
            <person name="Hirao M."/>
            <person name="Ohmori Y."/>
            <person name="Kawabata A."/>
            <person name="Hikiji T."/>
            <person name="Kobatake N."/>
            <person name="Inagaki H."/>
            <person name="Ikema Y."/>
            <person name="Okamoto S."/>
            <person name="Okitani R."/>
            <person name="Kawakami T."/>
            <person name="Noguchi S."/>
            <person name="Itoh T."/>
            <person name="Shigeta K."/>
            <person name="Senba T."/>
            <person name="Matsumura K."/>
            <person name="Nakajima Y."/>
            <person name="Mizuno T."/>
            <person name="Morinaga M."/>
            <person name="Sasaki M."/>
            <person name="Togashi T."/>
            <person name="Oyama M."/>
            <person name="Hata H."/>
            <person name="Watanabe M."/>
            <person name="Komatsu T."/>
            <person name="Mizushima-Sugano J."/>
            <person name="Satoh T."/>
            <person name="Shirai Y."/>
            <person name="Takahashi Y."/>
            <person name="Nakagawa K."/>
            <person name="Okumura K."/>
            <person name="Nagase T."/>
            <person name="Nomura N."/>
            <person name="Kikuchi H."/>
            <person name="Masuho Y."/>
            <person name="Yamashita R."/>
            <person name="Nakai K."/>
            <person name="Yada T."/>
            <person name="Nakamura Y."/>
            <person name="Ohara O."/>
            <person name="Isogai T."/>
            <person name="Sugano S."/>
        </authorList>
    </citation>
    <scope>NUCLEOTIDE SEQUENCE [LARGE SCALE MRNA]</scope>
</reference>
<reference key="6">
    <citation type="journal article" date="2004" name="Genome Res.">
        <title>The status, quality, and expansion of the NIH full-length cDNA project: the Mammalian Gene Collection (MGC).</title>
        <authorList>
            <consortium name="The MGC Project Team"/>
        </authorList>
    </citation>
    <scope>NUCLEOTIDE SEQUENCE [LARGE SCALE MRNA]</scope>
    <source>
        <tissue>Brain cortex</tissue>
        <tissue>Lung</tissue>
    </source>
</reference>
<reference key="7">
    <citation type="journal article" date="2011" name="BMC Syst. Biol.">
        <title>Initial characterization of the human central proteome.</title>
        <authorList>
            <person name="Burkard T.R."/>
            <person name="Planyavsky M."/>
            <person name="Kaupe I."/>
            <person name="Breitwieser F.P."/>
            <person name="Buerckstuemmer T."/>
            <person name="Bennett K.L."/>
            <person name="Superti-Furga G."/>
            <person name="Colinge J."/>
        </authorList>
    </citation>
    <scope>IDENTIFICATION BY MASS SPECTROMETRY [LARGE SCALE ANALYSIS]</scope>
</reference>
<reference key="8">
    <citation type="journal article" date="2012" name="Nat. Cell Biol.">
        <title>Defining human ERAD networks through an integrative mapping strategy.</title>
        <authorList>
            <person name="Christianson J.C."/>
            <person name="Olzmann J.A."/>
            <person name="Shaler T.A."/>
            <person name="Sowa M.E."/>
            <person name="Bennett E.J."/>
            <person name="Richter C.M."/>
            <person name="Tyler R.E."/>
            <person name="Greenblatt E.J."/>
            <person name="Harper J.W."/>
            <person name="Kopito R.R."/>
        </authorList>
    </citation>
    <scope>IDENTIFICATION IN THE EMC COMPLEX</scope>
    <scope>SUBCELLULAR LOCATION</scope>
</reference>
<reference key="9">
    <citation type="journal article" date="2015" name="Proteomics">
        <title>N-terminome analysis of the human mitochondrial proteome.</title>
        <authorList>
            <person name="Vaca Jacome A.S."/>
            <person name="Rabilloud T."/>
            <person name="Schaeffer-Reiss C."/>
            <person name="Rompais M."/>
            <person name="Ayoub D."/>
            <person name="Lane L."/>
            <person name="Bairoch A."/>
            <person name="Van Dorsselaer A."/>
            <person name="Carapito C."/>
        </authorList>
    </citation>
    <scope>CLEAVAGE OF SIGNAL PEPTIDE [LARGE SCALE ANALYSIS] AFTER SER-23</scope>
    <scope>IDENTIFICATION BY MASS SPECTROMETRY [LARGE SCALE ANALYSIS]</scope>
</reference>
<reference key="10">
    <citation type="journal article" date="2007" name="J. Mol. Biol.">
        <title>Single MHC mutation eliminates enthalpy associated with T cell receptor binding.</title>
        <authorList>
            <person name="Miller P.J."/>
            <person name="Pazy Y."/>
            <person name="Conti B."/>
            <person name="Riddle D."/>
            <person name="Appella E."/>
            <person name="Collins E.J."/>
        </authorList>
    </citation>
    <scope>X-RAY CRYSTALLOGRAPHY (2.4 ANGSTROMS) OF 4-12</scope>
</reference>
<reference key="11">
    <citation type="journal article" date="2018" name="Cell">
        <title>EMC Is Required to Initiate Accurate Membrane Protein Topogenesis.</title>
        <authorList>
            <person name="Chitwood P.J."/>
            <person name="Juszkiewicz S."/>
            <person name="Guna A."/>
            <person name="Shao S."/>
            <person name="Hegde R.S."/>
        </authorList>
    </citation>
    <scope>FUNCTION</scope>
</reference>
<reference key="12">
    <citation type="journal article" date="2018" name="Elife">
        <title>The ER membrane protein complex interacts cotranslationally to enable biogenesis of multipass membrane proteins.</title>
        <authorList>
            <person name="Shurtleff M.J."/>
            <person name="Itzhak D.N."/>
            <person name="Hussmann J.A."/>
            <person name="Schirle Oakdale N.T."/>
            <person name="Costa E.A."/>
            <person name="Jonikas M."/>
            <person name="Weibezahn J."/>
            <person name="Popova K.D."/>
            <person name="Jan C.H."/>
            <person name="Sinitcyn P."/>
            <person name="Vembar S.S."/>
            <person name="Hernandez H."/>
            <person name="Cox J."/>
            <person name="Burlingame A.L."/>
            <person name="Brodsky J.L."/>
            <person name="Frost A."/>
            <person name="Borner G.H."/>
            <person name="Weissman J.S."/>
        </authorList>
    </citation>
    <scope>FUNCTION</scope>
</reference>
<reference key="13">
    <citation type="journal article" date="2018" name="Science">
        <title>The ER membrane protein complex is a transmembrane domain insertase.</title>
        <authorList>
            <person name="Guna A."/>
            <person name="Volkmar N."/>
            <person name="Christianson J.C."/>
            <person name="Hegde R.S."/>
        </authorList>
    </citation>
    <scope>FUNCTION</scope>
    <scope>SUBUNIT</scope>
</reference>
<reference evidence="11" key="14">
    <citation type="journal article" date="2020" name="Elife">
        <title>The architecture of EMC reveals a path for membrane protein insertion.</title>
        <authorList>
            <person name="O'Donnell J.P."/>
            <person name="Phillips B.P."/>
            <person name="Yagita Y."/>
            <person name="Juszkiewicz S."/>
            <person name="Wagner A."/>
            <person name="Malinverni D."/>
            <person name="Keenan R.J."/>
            <person name="Miller E.A."/>
            <person name="Hegde R.S."/>
        </authorList>
    </citation>
    <scope>STRUCTURE BY ELECTRON MICROSCOPY (6.40 ANGSTROMS) OF THE EMC COMPLEX</scope>
    <scope>FUNCTION</scope>
</reference>
<reference evidence="10" key="15">
    <citation type="journal article" date="2020" name="Science">
        <title>Structural basis for membrane insertion by the human ER membrane protein complex.</title>
        <authorList>
            <person name="Pleiner T."/>
            <person name="Tomaleri G.P."/>
            <person name="Januszyk K."/>
            <person name="Inglis A.J."/>
            <person name="Hazu M."/>
            <person name="Voorhees R.M."/>
        </authorList>
    </citation>
    <scope>STRUCTURE BY ELECTRON MICROSCOPY (3.40 ANGSTROMS) OF THE EMC COMPLEX</scope>
    <scope>TOPOLOGY</scope>
    <scope>SIGNAL PEPTIDE</scope>
</reference>
<name>EMC7_HUMAN</name>
<gene>
    <name type="primary">EMC7</name>
    <name type="synonym">C11orf3</name>
    <name type="synonym">C15orf24</name>
    <name type="ORF">HT022</name>
    <name type="ORF">UNQ905/PRO1926</name>
</gene>
<keyword id="KW-0002">3D-structure</keyword>
<keyword id="KW-0256">Endoplasmic reticulum</keyword>
<keyword id="KW-0472">Membrane</keyword>
<keyword id="KW-1267">Proteomics identification</keyword>
<keyword id="KW-1185">Reference proteome</keyword>
<keyword id="KW-0732">Signal</keyword>
<keyword id="KW-0812">Transmembrane</keyword>
<keyword id="KW-1133">Transmembrane helix</keyword>